<keyword id="KW-1003">Cell membrane</keyword>
<keyword id="KW-0472">Membrane</keyword>
<keyword id="KW-0677">Repeat</keyword>
<keyword id="KW-0812">Transmembrane</keyword>
<keyword id="KW-1133">Transmembrane helix</keyword>
<keyword id="KW-0813">Transport</keyword>
<reference key="1">
    <citation type="journal article" date="2008" name="PLoS Genet.">
        <title>Complete genome sequence of the N2-fixing broad host range endophyte Klebsiella pneumoniae 342 and virulence predictions verified in mice.</title>
        <authorList>
            <person name="Fouts D.E."/>
            <person name="Tyler H.L."/>
            <person name="DeBoy R.T."/>
            <person name="Daugherty S."/>
            <person name="Ren Q."/>
            <person name="Badger J.H."/>
            <person name="Durkin A.S."/>
            <person name="Huot H."/>
            <person name="Shrivastava S."/>
            <person name="Kothari S."/>
            <person name="Dodson R.J."/>
            <person name="Mohamoud Y."/>
            <person name="Khouri H."/>
            <person name="Roesch L.F.W."/>
            <person name="Krogfelt K.A."/>
            <person name="Struve C."/>
            <person name="Triplett E.W."/>
            <person name="Methe B.A."/>
        </authorList>
    </citation>
    <scope>NUCLEOTIDE SEQUENCE [LARGE SCALE GENOMIC DNA]</scope>
    <source>
        <strain>342</strain>
    </source>
</reference>
<name>Y3686_KLEP3</name>
<gene>
    <name type="ordered locus">KPK_3686</name>
</gene>
<organism>
    <name type="scientific">Klebsiella pneumoniae (strain 342)</name>
    <dbReference type="NCBI Taxonomy" id="507522"/>
    <lineage>
        <taxon>Bacteria</taxon>
        <taxon>Pseudomonadati</taxon>
        <taxon>Pseudomonadota</taxon>
        <taxon>Gammaproteobacteria</taxon>
        <taxon>Enterobacterales</taxon>
        <taxon>Enterobacteriaceae</taxon>
        <taxon>Klebsiella/Raoultella group</taxon>
        <taxon>Klebsiella</taxon>
        <taxon>Klebsiella pneumoniae complex</taxon>
    </lineage>
</organism>
<accession>B5XYN9</accession>
<sequence length="561" mass="60368">MNINVADLLNGNYILLLFVVLALGLCLGKLRLGSVQLGNSIGVLVVSLLLGQQHFAINTDALNLGFMLFIFCVGVEAGPNFFSIFFRDGKNYLMLALVMVGSAMLIATVLGKVFGWDIGLTAGMLAGAMTSTPVLVGAGDTLRHFGLPSDQLAQSLDHLSLGYALTYLVGLVSLIVGARYMPKLQHQDLQTSAQQIARERGLDTDSKRKVYLPVIRAYRVGPELVAWADGKNLRELGIYRQTGCYIERIRRNGILANPDGDAVLQMGDDIALVGYPDAHARLDPSFRNGKEVFDRDLLDMRIVTEEIVVKNHNAVGRRLAQLKLTDHGCFLNRVIRSQIEMPIDDNVVLNKGDVLQVSGDARRVKTVADRIGFISIHSQVTDLLAFCAFFIVGLMIGMITFQFSSFSFGIGNAAGLLFAGIMLGFLRANHPTFGYIPQGALNMVKEFGLMVFMAGVGLSAGAGINNGLGAVGGQMLAAGLIVSLLPVVICFLFGAYVLRMNRAMLFGAMMGARTCAPAMEIISDTARSNIPALGYAGTYAIANVLLTLAGTLIVIIWPGLQ</sequence>
<comment type="subcellular location">
    <subcellularLocation>
        <location evidence="1">Cell membrane</location>
        <topology evidence="1">Multi-pass membrane protein</topology>
    </subcellularLocation>
</comment>
<comment type="similarity">
    <text evidence="1">Belongs to the AAE transporter (TC 2.A.81) family. YbjL subfamily.</text>
</comment>
<feature type="chain" id="PRO_1000135188" description="Putative transport protein KPK_3686">
    <location>
        <begin position="1"/>
        <end position="561"/>
    </location>
</feature>
<feature type="transmembrane region" description="Helical" evidence="1">
    <location>
        <begin position="8"/>
        <end position="28"/>
    </location>
</feature>
<feature type="transmembrane region" description="Helical" evidence="1">
    <location>
        <begin position="37"/>
        <end position="57"/>
    </location>
</feature>
<feature type="transmembrane region" description="Helical" evidence="1">
    <location>
        <begin position="66"/>
        <end position="86"/>
    </location>
</feature>
<feature type="transmembrane region" description="Helical" evidence="1">
    <location>
        <begin position="94"/>
        <end position="114"/>
    </location>
</feature>
<feature type="transmembrane region" description="Helical" evidence="1">
    <location>
        <begin position="158"/>
        <end position="178"/>
    </location>
</feature>
<feature type="transmembrane region" description="Helical" evidence="1">
    <location>
        <begin position="383"/>
        <end position="403"/>
    </location>
</feature>
<feature type="transmembrane region" description="Helical" evidence="1">
    <location>
        <begin position="406"/>
        <end position="426"/>
    </location>
</feature>
<feature type="transmembrane region" description="Helical" evidence="1">
    <location>
        <begin position="447"/>
        <end position="467"/>
    </location>
</feature>
<feature type="transmembrane region" description="Helical" evidence="1">
    <location>
        <begin position="478"/>
        <end position="498"/>
    </location>
</feature>
<feature type="transmembrane region" description="Helical" evidence="1">
    <location>
        <begin position="540"/>
        <end position="560"/>
    </location>
</feature>
<feature type="domain" description="RCK C-terminal 1" evidence="1">
    <location>
        <begin position="202"/>
        <end position="288"/>
    </location>
</feature>
<feature type="domain" description="RCK C-terminal 2" evidence="1">
    <location>
        <begin position="292"/>
        <end position="373"/>
    </location>
</feature>
<dbReference type="EMBL" id="CP000964">
    <property type="protein sequence ID" value="ACI08822.1"/>
    <property type="molecule type" value="Genomic_DNA"/>
</dbReference>
<dbReference type="SMR" id="B5XYN9"/>
<dbReference type="KEGG" id="kpe:KPK_3686"/>
<dbReference type="HOGENOM" id="CLU_035023_2_2_6"/>
<dbReference type="BioCyc" id="KPNE507522:GI0B-3667-MONOMER"/>
<dbReference type="Proteomes" id="UP000001734">
    <property type="component" value="Chromosome"/>
</dbReference>
<dbReference type="GO" id="GO:0005886">
    <property type="term" value="C:plasma membrane"/>
    <property type="evidence" value="ECO:0007669"/>
    <property type="project" value="UniProtKB-SubCell"/>
</dbReference>
<dbReference type="GO" id="GO:0008324">
    <property type="term" value="F:monoatomic cation transmembrane transporter activity"/>
    <property type="evidence" value="ECO:0007669"/>
    <property type="project" value="InterPro"/>
</dbReference>
<dbReference type="GO" id="GO:0006813">
    <property type="term" value="P:potassium ion transport"/>
    <property type="evidence" value="ECO:0007669"/>
    <property type="project" value="InterPro"/>
</dbReference>
<dbReference type="FunFam" id="3.30.70.1450:FF:000003">
    <property type="entry name" value="Putative transport protein YbjL"/>
    <property type="match status" value="1"/>
</dbReference>
<dbReference type="Gene3D" id="3.30.70.1450">
    <property type="entry name" value="Regulator of K+ conductance, C-terminal domain"/>
    <property type="match status" value="2"/>
</dbReference>
<dbReference type="HAMAP" id="MF_01015">
    <property type="entry name" value="YbjL"/>
    <property type="match status" value="1"/>
</dbReference>
<dbReference type="InterPro" id="IPR050144">
    <property type="entry name" value="AAE_transporter"/>
</dbReference>
<dbReference type="InterPro" id="IPR006037">
    <property type="entry name" value="RCK_C"/>
</dbReference>
<dbReference type="InterPro" id="IPR036721">
    <property type="entry name" value="RCK_C_sf"/>
</dbReference>
<dbReference type="InterPro" id="IPR023017">
    <property type="entry name" value="Transp_YbjL_put"/>
</dbReference>
<dbReference type="InterPro" id="IPR006512">
    <property type="entry name" value="YidE_YbjL"/>
</dbReference>
<dbReference type="NCBIfam" id="NF003440">
    <property type="entry name" value="PRK04972.1"/>
    <property type="match status" value="1"/>
</dbReference>
<dbReference type="NCBIfam" id="TIGR01625">
    <property type="entry name" value="YidE_YbjL_dupl"/>
    <property type="match status" value="2"/>
</dbReference>
<dbReference type="PANTHER" id="PTHR30445">
    <property type="entry name" value="K(+)_H(+) ANTIPORTER SUBUNIT KHTT"/>
    <property type="match status" value="1"/>
</dbReference>
<dbReference type="PANTHER" id="PTHR30445:SF10">
    <property type="entry name" value="TRANSPORT PROTEIN YBJL-RELATED"/>
    <property type="match status" value="1"/>
</dbReference>
<dbReference type="Pfam" id="PF06826">
    <property type="entry name" value="Asp-Al_Ex"/>
    <property type="match status" value="2"/>
</dbReference>
<dbReference type="Pfam" id="PF02080">
    <property type="entry name" value="TrkA_C"/>
    <property type="match status" value="2"/>
</dbReference>
<dbReference type="SUPFAM" id="SSF116726">
    <property type="entry name" value="TrkA C-terminal domain-like"/>
    <property type="match status" value="2"/>
</dbReference>
<dbReference type="PROSITE" id="PS51202">
    <property type="entry name" value="RCK_C"/>
    <property type="match status" value="2"/>
</dbReference>
<protein>
    <recommendedName>
        <fullName evidence="1">Putative transport protein KPK_3686</fullName>
    </recommendedName>
</protein>
<evidence type="ECO:0000255" key="1">
    <source>
        <dbReference type="HAMAP-Rule" id="MF_01015"/>
    </source>
</evidence>
<proteinExistence type="inferred from homology"/>